<accession>Q7VKL4</accession>
<evidence type="ECO:0000255" key="1">
    <source>
        <dbReference type="HAMAP-Rule" id="MF_00362"/>
    </source>
</evidence>
<evidence type="ECO:0000305" key="2"/>
<name>RL10_HAEDU</name>
<dbReference type="EMBL" id="AE017143">
    <property type="protein sequence ID" value="AAP96611.1"/>
    <property type="molecule type" value="Genomic_DNA"/>
</dbReference>
<dbReference type="RefSeq" id="WP_010945640.1">
    <property type="nucleotide sequence ID" value="NC_002940.2"/>
</dbReference>
<dbReference type="SMR" id="Q7VKL4"/>
<dbReference type="STRING" id="233412.HD_1881"/>
<dbReference type="GeneID" id="60733462"/>
<dbReference type="KEGG" id="hdu:HD_1881"/>
<dbReference type="eggNOG" id="COG0244">
    <property type="taxonomic scope" value="Bacteria"/>
</dbReference>
<dbReference type="HOGENOM" id="CLU_092227_0_2_6"/>
<dbReference type="OrthoDB" id="9808307at2"/>
<dbReference type="Proteomes" id="UP000001022">
    <property type="component" value="Chromosome"/>
</dbReference>
<dbReference type="GO" id="GO:0015934">
    <property type="term" value="C:large ribosomal subunit"/>
    <property type="evidence" value="ECO:0007669"/>
    <property type="project" value="InterPro"/>
</dbReference>
<dbReference type="GO" id="GO:0070180">
    <property type="term" value="F:large ribosomal subunit rRNA binding"/>
    <property type="evidence" value="ECO:0007669"/>
    <property type="project" value="UniProtKB-UniRule"/>
</dbReference>
<dbReference type="GO" id="GO:0003735">
    <property type="term" value="F:structural constituent of ribosome"/>
    <property type="evidence" value="ECO:0007669"/>
    <property type="project" value="InterPro"/>
</dbReference>
<dbReference type="GO" id="GO:0006412">
    <property type="term" value="P:translation"/>
    <property type="evidence" value="ECO:0007669"/>
    <property type="project" value="UniProtKB-UniRule"/>
</dbReference>
<dbReference type="CDD" id="cd05797">
    <property type="entry name" value="Ribosomal_L10"/>
    <property type="match status" value="1"/>
</dbReference>
<dbReference type="FunFam" id="3.30.70.1730:FF:000001">
    <property type="entry name" value="50S ribosomal protein L10"/>
    <property type="match status" value="1"/>
</dbReference>
<dbReference type="Gene3D" id="3.30.70.1730">
    <property type="match status" value="1"/>
</dbReference>
<dbReference type="Gene3D" id="6.10.250.2350">
    <property type="match status" value="1"/>
</dbReference>
<dbReference type="HAMAP" id="MF_00362">
    <property type="entry name" value="Ribosomal_uL10"/>
    <property type="match status" value="1"/>
</dbReference>
<dbReference type="InterPro" id="IPR001790">
    <property type="entry name" value="Ribosomal_uL10"/>
</dbReference>
<dbReference type="InterPro" id="IPR043141">
    <property type="entry name" value="Ribosomal_uL10-like_sf"/>
</dbReference>
<dbReference type="InterPro" id="IPR022973">
    <property type="entry name" value="Ribosomal_uL10_bac"/>
</dbReference>
<dbReference type="InterPro" id="IPR047865">
    <property type="entry name" value="Ribosomal_uL10_bac_type"/>
</dbReference>
<dbReference type="InterPro" id="IPR002363">
    <property type="entry name" value="Ribosomal_uL10_CS_bac"/>
</dbReference>
<dbReference type="NCBIfam" id="NF000955">
    <property type="entry name" value="PRK00099.1-1"/>
    <property type="match status" value="1"/>
</dbReference>
<dbReference type="PANTHER" id="PTHR11560">
    <property type="entry name" value="39S RIBOSOMAL PROTEIN L10, MITOCHONDRIAL"/>
    <property type="match status" value="1"/>
</dbReference>
<dbReference type="Pfam" id="PF00466">
    <property type="entry name" value="Ribosomal_L10"/>
    <property type="match status" value="1"/>
</dbReference>
<dbReference type="SUPFAM" id="SSF160369">
    <property type="entry name" value="Ribosomal protein L10-like"/>
    <property type="match status" value="1"/>
</dbReference>
<dbReference type="PROSITE" id="PS01109">
    <property type="entry name" value="RIBOSOMAL_L10"/>
    <property type="match status" value="1"/>
</dbReference>
<keyword id="KW-1185">Reference proteome</keyword>
<keyword id="KW-0687">Ribonucleoprotein</keyword>
<keyword id="KW-0689">Ribosomal protein</keyword>
<keyword id="KW-0694">RNA-binding</keyword>
<keyword id="KW-0699">rRNA-binding</keyword>
<feature type="chain" id="PRO_0000154638" description="Large ribosomal subunit protein uL10">
    <location>
        <begin position="1"/>
        <end position="163"/>
    </location>
</feature>
<organism>
    <name type="scientific">Haemophilus ducreyi (strain 35000HP / ATCC 700724)</name>
    <dbReference type="NCBI Taxonomy" id="233412"/>
    <lineage>
        <taxon>Bacteria</taxon>
        <taxon>Pseudomonadati</taxon>
        <taxon>Pseudomonadota</taxon>
        <taxon>Gammaproteobacteria</taxon>
        <taxon>Pasteurellales</taxon>
        <taxon>Pasteurellaceae</taxon>
        <taxon>Haemophilus</taxon>
    </lineage>
</organism>
<gene>
    <name evidence="1" type="primary">rplJ</name>
    <name type="ordered locus">HD_1881</name>
</gene>
<reference key="1">
    <citation type="submission" date="2003-06" db="EMBL/GenBank/DDBJ databases">
        <title>The complete genome sequence of Haemophilus ducreyi.</title>
        <authorList>
            <person name="Munson R.S. Jr."/>
            <person name="Ray W.C."/>
            <person name="Mahairas G."/>
            <person name="Sabo P."/>
            <person name="Mungur R."/>
            <person name="Johnson L."/>
            <person name="Nguyen D."/>
            <person name="Wang J."/>
            <person name="Forst C."/>
            <person name="Hood L."/>
        </authorList>
    </citation>
    <scope>NUCLEOTIDE SEQUENCE [LARGE SCALE GENOMIC DNA]</scope>
    <source>
        <strain>35000HP / ATCC 700724</strain>
    </source>
</reference>
<protein>
    <recommendedName>
        <fullName evidence="1">Large ribosomal subunit protein uL10</fullName>
    </recommendedName>
    <alternativeName>
        <fullName evidence="2">50S ribosomal protein L10</fullName>
    </alternativeName>
</protein>
<comment type="function">
    <text evidence="1">Forms part of the ribosomal stalk, playing a central role in the interaction of the ribosome with GTP-bound translation factors.</text>
</comment>
<comment type="subunit">
    <text evidence="1">Part of the ribosomal stalk of the 50S ribosomal subunit. The N-terminus interacts with L11 and the large rRNA to form the base of the stalk. The C-terminus forms an elongated spine to which L12 dimers bind in a sequential fashion forming a multimeric L10(L12)X complex.</text>
</comment>
<comment type="similarity">
    <text evidence="1">Belongs to the universal ribosomal protein uL10 family.</text>
</comment>
<sequence length="163" mass="17667">MALNLQDKQAIVAEVNEAAKGALSAVVADSRGVTVEKMTELRKSAREAGVTMRVVRNTLLRRAVEGTEFECLTDTFTGPTLIAFSNEHPGAAARLFTEFAKTNKEFELKGAAFEGKVQNVEFLATLPTYEEAIARLMGTMKEAAAGKLVRTFAALRDKLQEAA</sequence>
<proteinExistence type="inferred from homology"/>